<accession>A6ZZY3</accession>
<feature type="chain" id="PRO_0000308767" description="Increased rDNA silencing protein 4">
    <location>
        <begin position="1"/>
        <end position="615"/>
    </location>
</feature>
<feature type="domain" description="EH">
    <location>
        <begin position="460"/>
        <end position="571"/>
    </location>
</feature>
<feature type="region of interest" description="Disordered" evidence="3">
    <location>
        <begin position="38"/>
        <end position="135"/>
    </location>
</feature>
<feature type="region of interest" description="Disordered" evidence="3">
    <location>
        <begin position="152"/>
        <end position="260"/>
    </location>
</feature>
<feature type="region of interest" description="Disordered" evidence="3">
    <location>
        <begin position="277"/>
        <end position="304"/>
    </location>
</feature>
<feature type="region of interest" description="Disordered" evidence="3">
    <location>
        <begin position="323"/>
        <end position="445"/>
    </location>
</feature>
<feature type="compositionally biased region" description="Polar residues" evidence="3">
    <location>
        <begin position="50"/>
        <end position="65"/>
    </location>
</feature>
<feature type="compositionally biased region" description="Low complexity" evidence="3">
    <location>
        <begin position="121"/>
        <end position="135"/>
    </location>
</feature>
<feature type="compositionally biased region" description="Low complexity" evidence="3">
    <location>
        <begin position="157"/>
        <end position="168"/>
    </location>
</feature>
<feature type="compositionally biased region" description="Low complexity" evidence="3">
    <location>
        <begin position="184"/>
        <end position="198"/>
    </location>
</feature>
<feature type="compositionally biased region" description="Polar residues" evidence="3">
    <location>
        <begin position="248"/>
        <end position="260"/>
    </location>
</feature>
<feature type="compositionally biased region" description="Low complexity" evidence="3">
    <location>
        <begin position="281"/>
        <end position="290"/>
    </location>
</feature>
<feature type="compositionally biased region" description="Basic and acidic residues" evidence="3">
    <location>
        <begin position="365"/>
        <end position="377"/>
    </location>
</feature>
<feature type="compositionally biased region" description="Acidic residues" evidence="3">
    <location>
        <begin position="389"/>
        <end position="402"/>
    </location>
</feature>
<feature type="compositionally biased region" description="Basic residues" evidence="3">
    <location>
        <begin position="409"/>
        <end position="438"/>
    </location>
</feature>
<feature type="modified residue" description="Phosphoserine" evidence="2">
    <location>
        <position position="180"/>
    </location>
</feature>
<comment type="function">
    <text evidence="1">With TAX4, acts as a positive regulator of INP51 activity and phosphatidylinositol 4,5-bisphosphate turnover. Negatively regulates signaling through the cell integrity pathway, including the MAP kinase SLT2. Also seems to be involved in rDNA silencing (By similarity).</text>
</comment>
<comment type="subunit">
    <text evidence="1">Interacts with INP51.</text>
</comment>
<comment type="similarity">
    <text evidence="4">Belongs to the IRS4 family.</text>
</comment>
<sequence>MRLSFGKQRYHGGTTVTLTEQGASDSLRAAQAIFQNHSNEVSSPCPPVTVSRNPQTRLSEPSLQKSGRKQEQKKARIRTKQVPKIKTTAPNDVELSKKHRSSPAGKDNVSSTAQMAAALAHSQSKLSSDNNSSHSSALDTLKVLETPNLNGLLGIHSRSSSRNGSNESLTPGQRTPDNRSQENLLTSFSSGRRLSSSSMEPATNKDSNKALPKRRPSPPLQSSLVGSGQLHENENLSSISIDSRHSLNPDTSDVISNRSQTSLSQTINQLSLCESEPSIASSNTTTTTSNQGSGLPNLVPNYSSDMRKKKLVNKFKRKVFGSKPKHLSSQYEMDASSEELGQHEQQPSMRFKTTLRKTSVSTNAENDHASSLHEGNLRYKYNPSNDTYDVYDDTDSDSESDQNQDALTKPRKRDRIKRKIRNSANKTAHHRPIHRTRDRKFNEDKPWKSHTDITFVTDNERKRYESMWVSNRHRHLNLLSWWPSLTGDSGAINTLPEDGLILGIIVRDIWKRSNLPNSLLAEIYTKVDTRKDGTLDRKSFIVGMWLVDQCLYGRKLPNVVEQCVWDSVDRYASTMVVPVSTLKAMAKQKRKQMKEEIKNIKKENRVVLVDHNSSS</sequence>
<reference key="1">
    <citation type="journal article" date="2007" name="Proc. Natl. Acad. Sci. U.S.A.">
        <title>Genome sequencing and comparative analysis of Saccharomyces cerevisiae strain YJM789.</title>
        <authorList>
            <person name="Wei W."/>
            <person name="McCusker J.H."/>
            <person name="Hyman R.W."/>
            <person name="Jones T."/>
            <person name="Ning Y."/>
            <person name="Cao Z."/>
            <person name="Gu Z."/>
            <person name="Bruno D."/>
            <person name="Miranda M."/>
            <person name="Nguyen M."/>
            <person name="Wilhelmy J."/>
            <person name="Komp C."/>
            <person name="Tamse R."/>
            <person name="Wang X."/>
            <person name="Jia P."/>
            <person name="Luedi P."/>
            <person name="Oefner P.J."/>
            <person name="David L."/>
            <person name="Dietrich F.S."/>
            <person name="Li Y."/>
            <person name="Davis R.W."/>
            <person name="Steinmetz L.M."/>
        </authorList>
    </citation>
    <scope>NUCLEOTIDE SEQUENCE [LARGE SCALE GENOMIC DNA]</scope>
    <source>
        <strain>YJM789</strain>
    </source>
</reference>
<proteinExistence type="inferred from homology"/>
<dbReference type="EMBL" id="AAFW02000152">
    <property type="protein sequence ID" value="EDN59926.1"/>
    <property type="molecule type" value="Genomic_DNA"/>
</dbReference>
<dbReference type="SMR" id="A6ZZY3"/>
<dbReference type="HOGENOM" id="CLU_454275_0_0_1"/>
<dbReference type="OrthoDB" id="41466at4893"/>
<dbReference type="Proteomes" id="UP000007060">
    <property type="component" value="Unassembled WGS sequence"/>
</dbReference>
<dbReference type="GO" id="GO:0006629">
    <property type="term" value="P:lipid metabolic process"/>
    <property type="evidence" value="ECO:0007669"/>
    <property type="project" value="UniProtKB-KW"/>
</dbReference>
<dbReference type="CDD" id="cd00052">
    <property type="entry name" value="EH"/>
    <property type="match status" value="1"/>
</dbReference>
<dbReference type="FunFam" id="1.10.238.10:FF:000326">
    <property type="entry name" value="IRS4p EH domain-containing protein"/>
    <property type="match status" value="1"/>
</dbReference>
<dbReference type="Gene3D" id="1.10.238.10">
    <property type="entry name" value="EF-hand"/>
    <property type="match status" value="1"/>
</dbReference>
<dbReference type="InterPro" id="IPR011992">
    <property type="entry name" value="EF-hand-dom_pair"/>
</dbReference>
<dbReference type="InterPro" id="IPR000261">
    <property type="entry name" value="EH_dom"/>
</dbReference>
<dbReference type="Pfam" id="PF12763">
    <property type="entry name" value="EH"/>
    <property type="match status" value="1"/>
</dbReference>
<dbReference type="SMART" id="SM00027">
    <property type="entry name" value="EH"/>
    <property type="match status" value="1"/>
</dbReference>
<dbReference type="SUPFAM" id="SSF47473">
    <property type="entry name" value="EF-hand"/>
    <property type="match status" value="1"/>
</dbReference>
<organism>
    <name type="scientific">Saccharomyces cerevisiae (strain YJM789)</name>
    <name type="common">Baker's yeast</name>
    <dbReference type="NCBI Taxonomy" id="307796"/>
    <lineage>
        <taxon>Eukaryota</taxon>
        <taxon>Fungi</taxon>
        <taxon>Dikarya</taxon>
        <taxon>Ascomycota</taxon>
        <taxon>Saccharomycotina</taxon>
        <taxon>Saccharomycetes</taxon>
        <taxon>Saccharomycetales</taxon>
        <taxon>Saccharomycetaceae</taxon>
        <taxon>Saccharomyces</taxon>
    </lineage>
</organism>
<keyword id="KW-0443">Lipid metabolism</keyword>
<keyword id="KW-0597">Phosphoprotein</keyword>
<evidence type="ECO:0000250" key="1"/>
<evidence type="ECO:0000250" key="2">
    <source>
        <dbReference type="UniProtKB" id="P36115"/>
    </source>
</evidence>
<evidence type="ECO:0000256" key="3">
    <source>
        <dbReference type="SAM" id="MobiDB-lite"/>
    </source>
</evidence>
<evidence type="ECO:0000305" key="4"/>
<protein>
    <recommendedName>
        <fullName>Increased rDNA silencing protein 4</fullName>
    </recommendedName>
</protein>
<gene>
    <name type="primary">IRS4</name>
    <name type="ORF">SCY_3393</name>
</gene>
<name>IRS4_YEAS7</name>